<reference key="1">
    <citation type="journal article" date="2009" name="PLoS Genet.">
        <title>Organised genome dynamics in the Escherichia coli species results in highly diverse adaptive paths.</title>
        <authorList>
            <person name="Touchon M."/>
            <person name="Hoede C."/>
            <person name="Tenaillon O."/>
            <person name="Barbe V."/>
            <person name="Baeriswyl S."/>
            <person name="Bidet P."/>
            <person name="Bingen E."/>
            <person name="Bonacorsi S."/>
            <person name="Bouchier C."/>
            <person name="Bouvet O."/>
            <person name="Calteau A."/>
            <person name="Chiapello H."/>
            <person name="Clermont O."/>
            <person name="Cruveiller S."/>
            <person name="Danchin A."/>
            <person name="Diard M."/>
            <person name="Dossat C."/>
            <person name="Karoui M.E."/>
            <person name="Frapy E."/>
            <person name="Garry L."/>
            <person name="Ghigo J.M."/>
            <person name="Gilles A.M."/>
            <person name="Johnson J."/>
            <person name="Le Bouguenec C."/>
            <person name="Lescat M."/>
            <person name="Mangenot S."/>
            <person name="Martinez-Jehanne V."/>
            <person name="Matic I."/>
            <person name="Nassif X."/>
            <person name="Oztas S."/>
            <person name="Petit M.A."/>
            <person name="Pichon C."/>
            <person name="Rouy Z."/>
            <person name="Ruf C.S."/>
            <person name="Schneider D."/>
            <person name="Tourret J."/>
            <person name="Vacherie B."/>
            <person name="Vallenet D."/>
            <person name="Medigue C."/>
            <person name="Rocha E.P.C."/>
            <person name="Denamur E."/>
        </authorList>
    </citation>
    <scope>NUCLEOTIDE SEQUENCE [LARGE SCALE GENOMIC DNA]</scope>
    <source>
        <strain>IAI39 / ExPEC</strain>
    </source>
</reference>
<accession>B7NNX3</accession>
<comment type="similarity">
    <text evidence="1">Belongs to the UPF0304 family.</text>
</comment>
<sequence length="164" mass="19536">MEMTNAQRLILSNQYKMMTMLDPANAERYRRLQTIIERGYGLQMRELDREFGELKEETCRTIIDIMEMYHALHVSWSNLQDQQSIDERRVTFLGFDAATEARYLGYVRFMVNVEGRYTHFDAGTHGFNAQTPMWEKYQRMLNVWHACPRQYHLSANEINQIINA</sequence>
<gene>
    <name evidence="1" type="primary">yfbU</name>
    <name type="ordered locus">ECIAI39_2441</name>
</gene>
<evidence type="ECO:0000255" key="1">
    <source>
        <dbReference type="HAMAP-Rule" id="MF_00762"/>
    </source>
</evidence>
<feature type="chain" id="PRO_1000198339" description="UPF0304 protein YfbU">
    <location>
        <begin position="1"/>
        <end position="164"/>
    </location>
</feature>
<organism>
    <name type="scientific">Escherichia coli O7:K1 (strain IAI39 / ExPEC)</name>
    <dbReference type="NCBI Taxonomy" id="585057"/>
    <lineage>
        <taxon>Bacteria</taxon>
        <taxon>Pseudomonadati</taxon>
        <taxon>Pseudomonadota</taxon>
        <taxon>Gammaproteobacteria</taxon>
        <taxon>Enterobacterales</taxon>
        <taxon>Enterobacteriaceae</taxon>
        <taxon>Escherichia</taxon>
    </lineage>
</organism>
<name>YFBU_ECO7I</name>
<proteinExistence type="inferred from homology"/>
<protein>
    <recommendedName>
        <fullName evidence="1">UPF0304 protein YfbU</fullName>
    </recommendedName>
</protein>
<dbReference type="EMBL" id="CU928164">
    <property type="protein sequence ID" value="CAR18567.1"/>
    <property type="molecule type" value="Genomic_DNA"/>
</dbReference>
<dbReference type="RefSeq" id="WP_000426124.1">
    <property type="nucleotide sequence ID" value="NC_011750.1"/>
</dbReference>
<dbReference type="RefSeq" id="YP_002408397.1">
    <property type="nucleotide sequence ID" value="NC_011750.1"/>
</dbReference>
<dbReference type="SMR" id="B7NNX3"/>
<dbReference type="STRING" id="585057.ECIAI39_2441"/>
<dbReference type="KEGG" id="ect:ECIAI39_2441"/>
<dbReference type="PATRIC" id="fig|585057.6.peg.2543"/>
<dbReference type="HOGENOM" id="CLU_101021_1_0_6"/>
<dbReference type="Proteomes" id="UP000000749">
    <property type="component" value="Chromosome"/>
</dbReference>
<dbReference type="FunFam" id="1.10.3190.10:FF:000001">
    <property type="entry name" value="UPF0304 protein YfbU"/>
    <property type="match status" value="1"/>
</dbReference>
<dbReference type="Gene3D" id="1.10.287.680">
    <property type="entry name" value="Helix hairpin bin"/>
    <property type="match status" value="1"/>
</dbReference>
<dbReference type="Gene3D" id="1.10.3190.10">
    <property type="entry name" value="yfbu gene product, domain 2"/>
    <property type="match status" value="1"/>
</dbReference>
<dbReference type="HAMAP" id="MF_00762">
    <property type="entry name" value="UPF0304"/>
    <property type="match status" value="1"/>
</dbReference>
<dbReference type="InterPro" id="IPR005587">
    <property type="entry name" value="UPF0304_YfbU"/>
</dbReference>
<dbReference type="InterPro" id="IPR023146">
    <property type="entry name" value="YfbU_alpha-helical_sf"/>
</dbReference>
<dbReference type="InterPro" id="IPR023145">
    <property type="entry name" value="YfbU_helix-hairpin_sf"/>
</dbReference>
<dbReference type="NCBIfam" id="NF003936">
    <property type="entry name" value="PRK05445.1"/>
    <property type="match status" value="1"/>
</dbReference>
<dbReference type="Pfam" id="PF03887">
    <property type="entry name" value="YfbU"/>
    <property type="match status" value="1"/>
</dbReference>
<dbReference type="PIRSF" id="PIRSF006272">
    <property type="entry name" value="UCP006272"/>
    <property type="match status" value="1"/>
</dbReference>
<dbReference type="SUPFAM" id="SSF116960">
    <property type="entry name" value="YfbU-like"/>
    <property type="match status" value="1"/>
</dbReference>